<comment type="function">
    <text evidence="1">Responsible for synthesis of pseudouridine from uracil-55 in the psi GC loop of transfer RNAs.</text>
</comment>
<comment type="catalytic activity">
    <reaction evidence="1">
        <text>uridine(55) in tRNA = pseudouridine(55) in tRNA</text>
        <dbReference type="Rhea" id="RHEA:42532"/>
        <dbReference type="Rhea" id="RHEA-COMP:10101"/>
        <dbReference type="Rhea" id="RHEA-COMP:10102"/>
        <dbReference type="ChEBI" id="CHEBI:65314"/>
        <dbReference type="ChEBI" id="CHEBI:65315"/>
        <dbReference type="EC" id="5.4.99.25"/>
    </reaction>
</comment>
<comment type="similarity">
    <text evidence="1">Belongs to the pseudouridine synthase TruB family. Type 1 subfamily.</text>
</comment>
<accession>P65858</accession>
<accession>Q48YJ3</accession>
<accession>Q99ZF5</accession>
<name>TRUB_STRP1</name>
<gene>
    <name evidence="1" type="primary">truB</name>
    <name type="ordered locus">SPy_1251</name>
    <name type="ordered locus">M5005_Spy0961</name>
</gene>
<evidence type="ECO:0000255" key="1">
    <source>
        <dbReference type="HAMAP-Rule" id="MF_01080"/>
    </source>
</evidence>
<sequence length="294" mass="32345">MINGIINLKKEAGMTSHDAVFKLRKLLQEKKIGHGGTLDPDVVGVLPIAVGKATRVIEYMTEAGKVYEGQVTLGYSTTTEDASGEVVARSSLPAVLTEELVDQTMTTFLGKITQTPPMYSAVKVNGRKLYEYARAGESVERPRREVTISLFERTSPLNFTEDGLCRFSFKVACSKGTYVRTLAVDLGRALGVESHMSFLQRSASAGLTLETAYTLGEIADMVSKQEMSFLLPIEYGVADLPKMVIDDTELTEISFGRRLSLPSQEPLLAAFHGEKVIAILEKRDQEYKPKKVLI</sequence>
<reference key="1">
    <citation type="journal article" date="2001" name="Proc. Natl. Acad. Sci. U.S.A.">
        <title>Complete genome sequence of an M1 strain of Streptococcus pyogenes.</title>
        <authorList>
            <person name="Ferretti J.J."/>
            <person name="McShan W.M."/>
            <person name="Ajdic D.J."/>
            <person name="Savic D.J."/>
            <person name="Savic G."/>
            <person name="Lyon K."/>
            <person name="Primeaux C."/>
            <person name="Sezate S."/>
            <person name="Suvorov A.N."/>
            <person name="Kenton S."/>
            <person name="Lai H.S."/>
            <person name="Lin S.P."/>
            <person name="Qian Y."/>
            <person name="Jia H.G."/>
            <person name="Najar F.Z."/>
            <person name="Ren Q."/>
            <person name="Zhu H."/>
            <person name="Song L."/>
            <person name="White J."/>
            <person name="Yuan X."/>
            <person name="Clifton S.W."/>
            <person name="Roe B.A."/>
            <person name="McLaughlin R.E."/>
        </authorList>
    </citation>
    <scope>NUCLEOTIDE SEQUENCE [LARGE SCALE GENOMIC DNA]</scope>
    <source>
        <strain>ATCC 700294 / SF370 / Serotype M1</strain>
    </source>
</reference>
<reference key="2">
    <citation type="journal article" date="2005" name="J. Infect. Dis.">
        <title>Evolutionary origin and emergence of a highly successful clone of serotype M1 group A Streptococcus involved multiple horizontal gene transfer events.</title>
        <authorList>
            <person name="Sumby P."/>
            <person name="Porcella S.F."/>
            <person name="Madrigal A.G."/>
            <person name="Barbian K.D."/>
            <person name="Virtaneva K."/>
            <person name="Ricklefs S.M."/>
            <person name="Sturdevant D.E."/>
            <person name="Graham M.R."/>
            <person name="Vuopio-Varkila J."/>
            <person name="Hoe N.P."/>
            <person name="Musser J.M."/>
        </authorList>
    </citation>
    <scope>NUCLEOTIDE SEQUENCE [LARGE SCALE GENOMIC DNA]</scope>
    <source>
        <strain>ATCC BAA-947 / MGAS5005 / Serotype M1</strain>
    </source>
</reference>
<dbReference type="EC" id="5.4.99.25" evidence="1"/>
<dbReference type="EMBL" id="AE004092">
    <property type="protein sequence ID" value="AAK34106.1"/>
    <property type="molecule type" value="Genomic_DNA"/>
</dbReference>
<dbReference type="EMBL" id="CP000017">
    <property type="protein sequence ID" value="AAZ51579.1"/>
    <property type="molecule type" value="Genomic_DNA"/>
</dbReference>
<dbReference type="RefSeq" id="NP_269385.1">
    <property type="nucleotide sequence ID" value="NC_002737.2"/>
</dbReference>
<dbReference type="SMR" id="P65858"/>
<dbReference type="PaxDb" id="1314-HKU360_01006"/>
<dbReference type="KEGG" id="spy:SPy_1251"/>
<dbReference type="KEGG" id="spz:M5005_Spy0961"/>
<dbReference type="PATRIC" id="fig|160490.10.peg.1094"/>
<dbReference type="HOGENOM" id="CLU_032087_0_1_9"/>
<dbReference type="OMA" id="VDKPSGF"/>
<dbReference type="Proteomes" id="UP000000750">
    <property type="component" value="Chromosome"/>
</dbReference>
<dbReference type="GO" id="GO:0003723">
    <property type="term" value="F:RNA binding"/>
    <property type="evidence" value="ECO:0007669"/>
    <property type="project" value="InterPro"/>
</dbReference>
<dbReference type="GO" id="GO:0160148">
    <property type="term" value="F:tRNA pseudouridine(55) synthase activity"/>
    <property type="evidence" value="ECO:0007669"/>
    <property type="project" value="UniProtKB-EC"/>
</dbReference>
<dbReference type="GO" id="GO:1990481">
    <property type="term" value="P:mRNA pseudouridine synthesis"/>
    <property type="evidence" value="ECO:0007669"/>
    <property type="project" value="TreeGrafter"/>
</dbReference>
<dbReference type="GO" id="GO:0031119">
    <property type="term" value="P:tRNA pseudouridine synthesis"/>
    <property type="evidence" value="ECO:0007669"/>
    <property type="project" value="UniProtKB-UniRule"/>
</dbReference>
<dbReference type="CDD" id="cd02573">
    <property type="entry name" value="PseudoU_synth_EcTruB"/>
    <property type="match status" value="1"/>
</dbReference>
<dbReference type="FunFam" id="3.30.2350.10:FF:000011">
    <property type="entry name" value="tRNA pseudouridine synthase B"/>
    <property type="match status" value="1"/>
</dbReference>
<dbReference type="Gene3D" id="3.30.2350.10">
    <property type="entry name" value="Pseudouridine synthase"/>
    <property type="match status" value="1"/>
</dbReference>
<dbReference type="HAMAP" id="MF_01080">
    <property type="entry name" value="TruB_bact"/>
    <property type="match status" value="1"/>
</dbReference>
<dbReference type="InterPro" id="IPR020103">
    <property type="entry name" value="PsdUridine_synth_cat_dom_sf"/>
</dbReference>
<dbReference type="InterPro" id="IPR002501">
    <property type="entry name" value="PsdUridine_synth_N"/>
</dbReference>
<dbReference type="InterPro" id="IPR014780">
    <property type="entry name" value="tRNA_psdUridine_synth_TruB"/>
</dbReference>
<dbReference type="InterPro" id="IPR032819">
    <property type="entry name" value="TruB_C"/>
</dbReference>
<dbReference type="NCBIfam" id="TIGR00431">
    <property type="entry name" value="TruB"/>
    <property type="match status" value="1"/>
</dbReference>
<dbReference type="PANTHER" id="PTHR13767:SF2">
    <property type="entry name" value="PSEUDOURIDYLATE SYNTHASE TRUB1"/>
    <property type="match status" value="1"/>
</dbReference>
<dbReference type="PANTHER" id="PTHR13767">
    <property type="entry name" value="TRNA-PSEUDOURIDINE SYNTHASE"/>
    <property type="match status" value="1"/>
</dbReference>
<dbReference type="Pfam" id="PF16198">
    <property type="entry name" value="TruB_C_2"/>
    <property type="match status" value="1"/>
</dbReference>
<dbReference type="Pfam" id="PF01509">
    <property type="entry name" value="TruB_N"/>
    <property type="match status" value="1"/>
</dbReference>
<dbReference type="SUPFAM" id="SSF55120">
    <property type="entry name" value="Pseudouridine synthase"/>
    <property type="match status" value="1"/>
</dbReference>
<proteinExistence type="inferred from homology"/>
<feature type="chain" id="PRO_0000121917" description="tRNA pseudouridine synthase B">
    <location>
        <begin position="1"/>
        <end position="294"/>
    </location>
</feature>
<feature type="active site" description="Nucleophile" evidence="1">
    <location>
        <position position="39"/>
    </location>
</feature>
<keyword id="KW-0413">Isomerase</keyword>
<keyword id="KW-1185">Reference proteome</keyword>
<keyword id="KW-0819">tRNA processing</keyword>
<organism>
    <name type="scientific">Streptococcus pyogenes serotype M1</name>
    <dbReference type="NCBI Taxonomy" id="301447"/>
    <lineage>
        <taxon>Bacteria</taxon>
        <taxon>Bacillati</taxon>
        <taxon>Bacillota</taxon>
        <taxon>Bacilli</taxon>
        <taxon>Lactobacillales</taxon>
        <taxon>Streptococcaceae</taxon>
        <taxon>Streptococcus</taxon>
    </lineage>
</organism>
<protein>
    <recommendedName>
        <fullName evidence="1">tRNA pseudouridine synthase B</fullName>
        <ecNumber evidence="1">5.4.99.25</ecNumber>
    </recommendedName>
    <alternativeName>
        <fullName evidence="1">tRNA pseudouridine(55) synthase</fullName>
        <shortName evidence="1">Psi55 synthase</shortName>
    </alternativeName>
    <alternativeName>
        <fullName evidence="1">tRNA pseudouridylate synthase</fullName>
    </alternativeName>
    <alternativeName>
        <fullName evidence="1">tRNA-uridine isomerase</fullName>
    </alternativeName>
</protein>